<comment type="function">
    <text evidence="1">NDH shuttles electrons from NAD(P)H:plastoquinone, via FMN and iron-sulfur (Fe-S) centers, to quinones in the photosynthetic chain and possibly in a chloroplast respiratory chain. The immediate electron acceptor for the enzyme in this species is believed to be plastoquinone. Couples the redox reaction to proton translocation, and thus conserves the redox energy in a proton gradient.</text>
</comment>
<comment type="catalytic activity">
    <reaction evidence="1">
        <text>a plastoquinone + NADH + (n+1) H(+)(in) = a plastoquinol + NAD(+) + n H(+)(out)</text>
        <dbReference type="Rhea" id="RHEA:42608"/>
        <dbReference type="Rhea" id="RHEA-COMP:9561"/>
        <dbReference type="Rhea" id="RHEA-COMP:9562"/>
        <dbReference type="ChEBI" id="CHEBI:15378"/>
        <dbReference type="ChEBI" id="CHEBI:17757"/>
        <dbReference type="ChEBI" id="CHEBI:57540"/>
        <dbReference type="ChEBI" id="CHEBI:57945"/>
        <dbReference type="ChEBI" id="CHEBI:62192"/>
    </reaction>
</comment>
<comment type="catalytic activity">
    <reaction evidence="1">
        <text>a plastoquinone + NADPH + (n+1) H(+)(in) = a plastoquinol + NADP(+) + n H(+)(out)</text>
        <dbReference type="Rhea" id="RHEA:42612"/>
        <dbReference type="Rhea" id="RHEA-COMP:9561"/>
        <dbReference type="Rhea" id="RHEA-COMP:9562"/>
        <dbReference type="ChEBI" id="CHEBI:15378"/>
        <dbReference type="ChEBI" id="CHEBI:17757"/>
        <dbReference type="ChEBI" id="CHEBI:57783"/>
        <dbReference type="ChEBI" id="CHEBI:58349"/>
        <dbReference type="ChEBI" id="CHEBI:62192"/>
    </reaction>
</comment>
<comment type="subunit">
    <text evidence="1">NDH is composed of at least 16 different subunits, 5 of which are encoded in the nucleus.</text>
</comment>
<comment type="subcellular location">
    <subcellularLocation>
        <location evidence="1">Plastid</location>
        <location evidence="1">Chloroplast thylakoid membrane</location>
        <topology evidence="1">Peripheral membrane protein</topology>
        <orientation evidence="1">Stromal side</orientation>
    </subcellularLocation>
</comment>
<comment type="similarity">
    <text evidence="1">Belongs to the complex I 30 kDa subunit family.</text>
</comment>
<evidence type="ECO:0000255" key="1">
    <source>
        <dbReference type="HAMAP-Rule" id="MF_01357"/>
    </source>
</evidence>
<organism>
    <name type="scientific">Chaetosphaeridium globosum</name>
    <name type="common">Charophycean green alga</name>
    <name type="synonym">Herposteiron globosum</name>
    <dbReference type="NCBI Taxonomy" id="96477"/>
    <lineage>
        <taxon>Eukaryota</taxon>
        <taxon>Viridiplantae</taxon>
        <taxon>Streptophyta</taxon>
        <taxon>Coleochaetophyceae</taxon>
        <taxon>Coleochaetales</taxon>
        <taxon>Chaetosphaeridiaceae</taxon>
        <taxon>Chaetosphaeridium</taxon>
    </lineage>
</organism>
<protein>
    <recommendedName>
        <fullName evidence="1">NAD(P)H-quinone oxidoreductase subunit J, chloroplastic</fullName>
        <ecNumber evidence="1">7.1.1.-</ecNumber>
    </recommendedName>
    <alternativeName>
        <fullName>NAD(P)H dehydrogenase subunit J</fullName>
    </alternativeName>
    <alternativeName>
        <fullName evidence="1">NADH-plastoquinone oxidoreductase subunit J</fullName>
    </alternativeName>
</protein>
<reference key="1">
    <citation type="journal article" date="2002" name="Proc. Natl. Acad. Sci. U.S.A.">
        <title>The chloroplast and mitochondrial genome sequences of the charophyte Chaetosphaeridium globosum: insights into the timing of the events that restructured organelle DNAs within the green algal lineage that led to land plants.</title>
        <authorList>
            <person name="Turmel M."/>
            <person name="Otis C."/>
            <person name="Lemieux C."/>
        </authorList>
    </citation>
    <scope>NUCLEOTIDE SEQUENCE [LARGE SCALE GENOMIC DNA]</scope>
    <source>
        <strain>M1311</strain>
    </source>
</reference>
<keyword id="KW-0150">Chloroplast</keyword>
<keyword id="KW-0472">Membrane</keyword>
<keyword id="KW-0520">NAD</keyword>
<keyword id="KW-0521">NADP</keyword>
<keyword id="KW-0934">Plastid</keyword>
<keyword id="KW-0618">Plastoquinone</keyword>
<keyword id="KW-0874">Quinone</keyword>
<keyword id="KW-0793">Thylakoid</keyword>
<keyword id="KW-1278">Translocase</keyword>
<keyword id="KW-0813">Transport</keyword>
<accession>Q8M9Y0</accession>
<geneLocation type="chloroplast"/>
<dbReference type="EC" id="7.1.1.-" evidence="1"/>
<dbReference type="EMBL" id="AF494278">
    <property type="protein sequence ID" value="AAM96523.1"/>
    <property type="molecule type" value="Genomic_DNA"/>
</dbReference>
<dbReference type="RefSeq" id="NP_683806.2">
    <property type="nucleotide sequence ID" value="NC_004115.1"/>
</dbReference>
<dbReference type="SMR" id="Q8M9Y0"/>
<dbReference type="GeneID" id="860805"/>
<dbReference type="GO" id="GO:0009535">
    <property type="term" value="C:chloroplast thylakoid membrane"/>
    <property type="evidence" value="ECO:0007669"/>
    <property type="project" value="UniProtKB-SubCell"/>
</dbReference>
<dbReference type="GO" id="GO:0008137">
    <property type="term" value="F:NADH dehydrogenase (ubiquinone) activity"/>
    <property type="evidence" value="ECO:0007669"/>
    <property type="project" value="InterPro"/>
</dbReference>
<dbReference type="GO" id="GO:0048038">
    <property type="term" value="F:quinone binding"/>
    <property type="evidence" value="ECO:0007669"/>
    <property type="project" value="UniProtKB-KW"/>
</dbReference>
<dbReference type="GO" id="GO:0019684">
    <property type="term" value="P:photosynthesis, light reaction"/>
    <property type="evidence" value="ECO:0007669"/>
    <property type="project" value="UniProtKB-UniRule"/>
</dbReference>
<dbReference type="Gene3D" id="3.30.460.80">
    <property type="entry name" value="NADH:ubiquinone oxidoreductase, 30kDa subunit"/>
    <property type="match status" value="1"/>
</dbReference>
<dbReference type="HAMAP" id="MF_01357">
    <property type="entry name" value="NDH1_NuoC"/>
    <property type="match status" value="1"/>
</dbReference>
<dbReference type="InterPro" id="IPR010218">
    <property type="entry name" value="NADH_DH_suC"/>
</dbReference>
<dbReference type="InterPro" id="IPR037232">
    <property type="entry name" value="NADH_quin_OxRdtase_su_C/D-like"/>
</dbReference>
<dbReference type="InterPro" id="IPR001268">
    <property type="entry name" value="NADH_UbQ_OxRdtase_30kDa_su"/>
</dbReference>
<dbReference type="InterPro" id="IPR020396">
    <property type="entry name" value="NADH_UbQ_OxRdtase_CS"/>
</dbReference>
<dbReference type="NCBIfam" id="NF009141">
    <property type="entry name" value="PRK12494.1"/>
    <property type="match status" value="1"/>
</dbReference>
<dbReference type="PANTHER" id="PTHR10884:SF14">
    <property type="entry name" value="NADH DEHYDROGENASE [UBIQUINONE] IRON-SULFUR PROTEIN 3, MITOCHONDRIAL"/>
    <property type="match status" value="1"/>
</dbReference>
<dbReference type="PANTHER" id="PTHR10884">
    <property type="entry name" value="NADH DEHYDROGENASE UBIQUINONE IRON-SULFUR PROTEIN 3"/>
    <property type="match status" value="1"/>
</dbReference>
<dbReference type="Pfam" id="PF00329">
    <property type="entry name" value="Complex1_30kDa"/>
    <property type="match status" value="1"/>
</dbReference>
<dbReference type="SUPFAM" id="SSF143243">
    <property type="entry name" value="Nqo5-like"/>
    <property type="match status" value="1"/>
</dbReference>
<dbReference type="PROSITE" id="PS00542">
    <property type="entry name" value="COMPLEX1_30K"/>
    <property type="match status" value="1"/>
</dbReference>
<gene>
    <name evidence="1" type="primary">ndhJ</name>
</gene>
<feature type="chain" id="PRO_0000358251" description="NAD(P)H-quinone oxidoreductase subunit J, chloroplastic">
    <location>
        <begin position="1"/>
        <end position="168"/>
    </location>
</feature>
<name>NDHJ_CHAGL</name>
<proteinExistence type="inferred from homology"/>
<sequence length="168" mass="19651">MLDLFNKTSQVQGRISAWLASNNLPHRPLGFDYQGVETLQIKPEDWPSIAVALYVNGFNYLRCQCGYDVYPGGPLASVYYLTKVDDNVDQPEEVCIKIFVPRENPKIPSIFWVWKTADYQERETYDMLGIVYESHPNLKRILMPESWLGWPLRKDYITPDFYELQDAY</sequence>